<proteinExistence type="inferred from homology"/>
<reference key="1">
    <citation type="journal article" date="2011" name="J. Bacteriol.">
        <title>Comparative genomics of 28 Salmonella enterica isolates: evidence for CRISPR-mediated adaptive sublineage evolution.</title>
        <authorList>
            <person name="Fricke W.F."/>
            <person name="Mammel M.K."/>
            <person name="McDermott P.F."/>
            <person name="Tartera C."/>
            <person name="White D.G."/>
            <person name="Leclerc J.E."/>
            <person name="Ravel J."/>
            <person name="Cebula T.A."/>
        </authorList>
    </citation>
    <scope>NUCLEOTIDE SEQUENCE [LARGE SCALE GENOMIC DNA]</scope>
    <source>
        <strain>CT_02021853</strain>
    </source>
</reference>
<evidence type="ECO:0000255" key="1">
    <source>
        <dbReference type="HAMAP-Rule" id="MF_00695"/>
    </source>
</evidence>
<feature type="chain" id="PRO_1000132298" description="High frequency lysogenization protein HflD homolog">
    <location>
        <begin position="1"/>
        <end position="213"/>
    </location>
</feature>
<feature type="coiled-coil region" evidence="1">
    <location>
        <begin position="79"/>
        <end position="122"/>
    </location>
</feature>
<accession>B5FK71</accession>
<sequence>MAKNYYDITLALSGICQSARLVQQLAHQGHCDADALHVSLNSVIDMNPNSTLGVFGGSEANLRLGLETLLGVLNASSRQGLNAELTRYTLSLMVLERKLSSAKGALNTLGDRINGLQRQLDHFDLQSDTLMSAMAGIYVDVISPLGPRIQVTGSPAVLQSPQVQAKVRASLLAGIRAAVLWHQVGGGRLQLMFSRHRLTTQAKQILAHLTPEL</sequence>
<organism>
    <name type="scientific">Salmonella dublin (strain CT_02021853)</name>
    <dbReference type="NCBI Taxonomy" id="439851"/>
    <lineage>
        <taxon>Bacteria</taxon>
        <taxon>Pseudomonadati</taxon>
        <taxon>Pseudomonadota</taxon>
        <taxon>Gammaproteobacteria</taxon>
        <taxon>Enterobacterales</taxon>
        <taxon>Enterobacteriaceae</taxon>
        <taxon>Salmonella</taxon>
    </lineage>
</organism>
<keyword id="KW-0997">Cell inner membrane</keyword>
<keyword id="KW-1003">Cell membrane</keyword>
<keyword id="KW-0175">Coiled coil</keyword>
<keyword id="KW-0963">Cytoplasm</keyword>
<keyword id="KW-0472">Membrane</keyword>
<protein>
    <recommendedName>
        <fullName evidence="1">High frequency lysogenization protein HflD homolog</fullName>
    </recommendedName>
</protein>
<dbReference type="EMBL" id="CP001144">
    <property type="protein sequence ID" value="ACH74635.1"/>
    <property type="molecule type" value="Genomic_DNA"/>
</dbReference>
<dbReference type="SMR" id="B5FK71"/>
<dbReference type="KEGG" id="sed:SeD_A2133"/>
<dbReference type="HOGENOM" id="CLU_098920_0_0_6"/>
<dbReference type="Proteomes" id="UP000008322">
    <property type="component" value="Chromosome"/>
</dbReference>
<dbReference type="GO" id="GO:0005737">
    <property type="term" value="C:cytoplasm"/>
    <property type="evidence" value="ECO:0007669"/>
    <property type="project" value="UniProtKB-SubCell"/>
</dbReference>
<dbReference type="GO" id="GO:0005886">
    <property type="term" value="C:plasma membrane"/>
    <property type="evidence" value="ECO:0007669"/>
    <property type="project" value="UniProtKB-SubCell"/>
</dbReference>
<dbReference type="FunFam" id="1.10.3890.10:FF:000001">
    <property type="entry name" value="High frequency lysogenization protein HflD homolog"/>
    <property type="match status" value="1"/>
</dbReference>
<dbReference type="Gene3D" id="1.10.3890.10">
    <property type="entry name" value="HflD-like"/>
    <property type="match status" value="1"/>
</dbReference>
<dbReference type="HAMAP" id="MF_00695">
    <property type="entry name" value="HflD_protein"/>
    <property type="match status" value="1"/>
</dbReference>
<dbReference type="InterPro" id="IPR007451">
    <property type="entry name" value="HflD"/>
</dbReference>
<dbReference type="InterPro" id="IPR035932">
    <property type="entry name" value="HflD-like_sf"/>
</dbReference>
<dbReference type="NCBIfam" id="NF001245">
    <property type="entry name" value="PRK00218.1-1"/>
    <property type="match status" value="1"/>
</dbReference>
<dbReference type="NCBIfam" id="NF001246">
    <property type="entry name" value="PRK00218.1-2"/>
    <property type="match status" value="1"/>
</dbReference>
<dbReference type="NCBIfam" id="NF001248">
    <property type="entry name" value="PRK00218.1-4"/>
    <property type="match status" value="1"/>
</dbReference>
<dbReference type="NCBIfam" id="NF001249">
    <property type="entry name" value="PRK00218.1-5"/>
    <property type="match status" value="1"/>
</dbReference>
<dbReference type="PANTHER" id="PTHR38100">
    <property type="entry name" value="HIGH FREQUENCY LYSOGENIZATION PROTEIN HFLD"/>
    <property type="match status" value="1"/>
</dbReference>
<dbReference type="PANTHER" id="PTHR38100:SF1">
    <property type="entry name" value="HIGH FREQUENCY LYSOGENIZATION PROTEIN HFLD"/>
    <property type="match status" value="1"/>
</dbReference>
<dbReference type="Pfam" id="PF04356">
    <property type="entry name" value="DUF489"/>
    <property type="match status" value="1"/>
</dbReference>
<dbReference type="SUPFAM" id="SSF101322">
    <property type="entry name" value="YcfC-like"/>
    <property type="match status" value="1"/>
</dbReference>
<gene>
    <name evidence="1" type="primary">hflD</name>
    <name type="ordered locus">SeD_A2133</name>
</gene>
<comment type="subcellular location">
    <subcellularLocation>
        <location>Cytoplasm</location>
    </subcellularLocation>
    <subcellularLocation>
        <location evidence="1">Cell inner membrane</location>
        <topology evidence="1">Peripheral membrane protein</topology>
        <orientation evidence="1">Cytoplasmic side</orientation>
    </subcellularLocation>
</comment>
<comment type="similarity">
    <text evidence="1">Belongs to the HflD family.</text>
</comment>
<name>HFLD_SALDC</name>